<reference key="1">
    <citation type="journal article" date="1998" name="Nature">
        <title>Deciphering the biology of Mycobacterium tuberculosis from the complete genome sequence.</title>
        <authorList>
            <person name="Cole S.T."/>
            <person name="Brosch R."/>
            <person name="Parkhill J."/>
            <person name="Garnier T."/>
            <person name="Churcher C.M."/>
            <person name="Harris D.E."/>
            <person name="Gordon S.V."/>
            <person name="Eiglmeier K."/>
            <person name="Gas S."/>
            <person name="Barry C.E. III"/>
            <person name="Tekaia F."/>
            <person name="Badcock K."/>
            <person name="Basham D."/>
            <person name="Brown D."/>
            <person name="Chillingworth T."/>
            <person name="Connor R."/>
            <person name="Davies R.M."/>
            <person name="Devlin K."/>
            <person name="Feltwell T."/>
            <person name="Gentles S."/>
            <person name="Hamlin N."/>
            <person name="Holroyd S."/>
            <person name="Hornsby T."/>
            <person name="Jagels K."/>
            <person name="Krogh A."/>
            <person name="McLean J."/>
            <person name="Moule S."/>
            <person name="Murphy L.D."/>
            <person name="Oliver S."/>
            <person name="Osborne J."/>
            <person name="Quail M.A."/>
            <person name="Rajandream M.A."/>
            <person name="Rogers J."/>
            <person name="Rutter S."/>
            <person name="Seeger K."/>
            <person name="Skelton S."/>
            <person name="Squares S."/>
            <person name="Squares R."/>
            <person name="Sulston J.E."/>
            <person name="Taylor K."/>
            <person name="Whitehead S."/>
            <person name="Barrell B.G."/>
        </authorList>
    </citation>
    <scope>NUCLEOTIDE SEQUENCE [LARGE SCALE GENOMIC DNA]</scope>
    <source>
        <strain>ATCC 25618 / H37Rv</strain>
    </source>
</reference>
<reference key="2">
    <citation type="journal article" date="2011" name="BMC Genomics">
        <title>Bioinformatic evidence for a widely distributed, ribosomally produced electron carrier precursor, its maturation proteins, and its nicotinoprotein redox partners.</title>
        <authorList>
            <person name="Haft D.H."/>
        </authorList>
    </citation>
    <scope>POSSIBLE FUNCTION</scope>
    <source>
        <strain>ATCC 25618 / H37Rv</strain>
    </source>
</reference>
<comment type="function">
    <text evidence="1">Peptide chaperone involved in the biosynthesis of the enzyme cofactor mycofactocin (MFT). Binds MftA and MftC with high affinity, and is essential for MftC activity on MftA, likely via the formation of a ternary complex.</text>
</comment>
<comment type="similarity">
    <text evidence="3">Belongs to the peptide chaperone MftB family.</text>
</comment>
<gene>
    <name evidence="2" type="primary">mftB</name>
    <name type="ordered locus">Rv0692</name>
</gene>
<dbReference type="EMBL" id="AL123456">
    <property type="protein sequence ID" value="CCP43436.1"/>
    <property type="molecule type" value="Genomic_DNA"/>
</dbReference>
<dbReference type="PIR" id="G70640">
    <property type="entry name" value="G70640"/>
</dbReference>
<dbReference type="RefSeq" id="NP_215206.1">
    <property type="nucleotide sequence ID" value="NC_000962.3"/>
</dbReference>
<dbReference type="RefSeq" id="WP_003403486.1">
    <property type="nucleotide sequence ID" value="NZ_NVQJ01000007.1"/>
</dbReference>
<dbReference type="SMR" id="P95038"/>
<dbReference type="STRING" id="83332.Rv0692"/>
<dbReference type="PaxDb" id="83332-Rv0692"/>
<dbReference type="DNASU" id="888285"/>
<dbReference type="GeneID" id="888285"/>
<dbReference type="KEGG" id="mtu:Rv0692"/>
<dbReference type="KEGG" id="mtv:RVBD_0692"/>
<dbReference type="TubercuList" id="Rv0692"/>
<dbReference type="eggNOG" id="COG0535">
    <property type="taxonomic scope" value="Bacteria"/>
</dbReference>
<dbReference type="InParanoid" id="P95038"/>
<dbReference type="OrthoDB" id="3784885at2"/>
<dbReference type="Proteomes" id="UP000001584">
    <property type="component" value="Chromosome"/>
</dbReference>
<dbReference type="InterPro" id="IPR023850">
    <property type="entry name" value="MftB"/>
</dbReference>
<dbReference type="NCBIfam" id="TIGR03967">
    <property type="entry name" value="mycofact_MftB"/>
    <property type="match status" value="1"/>
</dbReference>
<evidence type="ECO:0000250" key="1">
    <source>
        <dbReference type="UniProtKB" id="A0PM48"/>
    </source>
</evidence>
<evidence type="ECO:0000303" key="2">
    <source>
    </source>
</evidence>
<evidence type="ECO:0000305" key="3"/>
<accession>P95038</accession>
<accession>L0T4K6</accession>
<protein>
    <recommendedName>
        <fullName evidence="3">Peptide chaperone MftB</fullName>
    </recommendedName>
</protein>
<sequence>MWGLLTVPAPAQARRADSSEFDPDRGWRLHPQVAVRPEPFGALLYHFGTRKLSFLKNRTILAVVQTLADYPDIRSACRGAGVDDCDQDPYLHALSVLAGSNMLVPRQTT</sequence>
<feature type="chain" id="PRO_0000415283" description="Peptide chaperone MftB">
    <location>
        <begin position="1"/>
        <end position="109"/>
    </location>
</feature>
<organism>
    <name type="scientific">Mycobacterium tuberculosis (strain ATCC 25618 / H37Rv)</name>
    <dbReference type="NCBI Taxonomy" id="83332"/>
    <lineage>
        <taxon>Bacteria</taxon>
        <taxon>Bacillati</taxon>
        <taxon>Actinomycetota</taxon>
        <taxon>Actinomycetes</taxon>
        <taxon>Mycobacteriales</taxon>
        <taxon>Mycobacteriaceae</taxon>
        <taxon>Mycobacterium</taxon>
        <taxon>Mycobacterium tuberculosis complex</taxon>
    </lineage>
</organism>
<proteinExistence type="inferred from homology"/>
<keyword id="KW-1185">Reference proteome</keyword>
<name>MFTB_MYCTU</name>